<proteinExistence type="inferred from homology"/>
<feature type="chain" id="PRO_0000129811" description="Small ribosomal subunit protein uS19">
    <location>
        <begin position="1" status="less than"/>
        <end position="12"/>
    </location>
</feature>
<feature type="non-terminal residue">
    <location>
        <position position="1"/>
    </location>
</feature>
<accession>Q46490</accession>
<organism>
    <name type="scientific">Clover yellow edge phytoplasma</name>
    <dbReference type="NCBI Taxonomy" id="35775"/>
    <lineage>
        <taxon>Bacteria</taxon>
        <taxon>Bacillati</taxon>
        <taxon>Mycoplasmatota</taxon>
        <taxon>Mollicutes</taxon>
        <taxon>Acholeplasmatales</taxon>
        <taxon>Acholeplasmataceae</taxon>
        <taxon>Candidatus Phytoplasma</taxon>
        <taxon>16SrIII (X-disease group)</taxon>
    </lineage>
</organism>
<gene>
    <name type="primary">rpsS</name>
    <name type="synonym">rps19</name>
</gene>
<sequence>GHAKKDKKIQKK</sequence>
<evidence type="ECO:0000250" key="1"/>
<evidence type="ECO:0000305" key="2"/>
<dbReference type="EMBL" id="L27019">
    <property type="protein sequence ID" value="AAA83940.1"/>
    <property type="molecule type" value="Genomic_DNA"/>
</dbReference>
<dbReference type="GO" id="GO:1990904">
    <property type="term" value="C:ribonucleoprotein complex"/>
    <property type="evidence" value="ECO:0007669"/>
    <property type="project" value="UniProtKB-KW"/>
</dbReference>
<dbReference type="GO" id="GO:0005840">
    <property type="term" value="C:ribosome"/>
    <property type="evidence" value="ECO:0007669"/>
    <property type="project" value="UniProtKB-KW"/>
</dbReference>
<dbReference type="GO" id="GO:0019843">
    <property type="term" value="F:rRNA binding"/>
    <property type="evidence" value="ECO:0007669"/>
    <property type="project" value="UniProtKB-KW"/>
</dbReference>
<keyword id="KW-0687">Ribonucleoprotein</keyword>
<keyword id="KW-0689">Ribosomal protein</keyword>
<keyword id="KW-0694">RNA-binding</keyword>
<keyword id="KW-0699">rRNA-binding</keyword>
<protein>
    <recommendedName>
        <fullName evidence="2">Small ribosomal subunit protein uS19</fullName>
    </recommendedName>
    <alternativeName>
        <fullName>30S ribosomal protein S19</fullName>
    </alternativeName>
</protein>
<name>RS19_CLYEP</name>
<reference key="1">
    <citation type="journal article" date="1994" name="J. Bacteriol.">
        <title>Phylogeny of mycoplasmalike organisms (phytoplasmas): a basis for their classification.</title>
        <authorList>
            <person name="Gundersen D.E."/>
            <person name="Lee I.M."/>
            <person name="Rehner S.A."/>
            <person name="Davis R.E."/>
            <person name="Kingsbury D.T."/>
        </authorList>
    </citation>
    <scope>NUCLEOTIDE SEQUENCE [GENOMIC DNA]</scope>
</reference>
<comment type="function">
    <text evidence="1">Protein S19 forms a complex with S13 that binds strongly to the 16S ribosomal RNA.</text>
</comment>
<comment type="similarity">
    <text evidence="2">Belongs to the universal ribosomal protein uS19 family.</text>
</comment>